<reference key="1">
    <citation type="journal article" date="2000" name="J. Biol. Chem.">
        <title>Cloning and characterization of the gene for phosphatidylcholine synthase.</title>
        <authorList>
            <person name="Sohlenkamp C."/>
            <person name="de Rudder K.E.E."/>
            <person name="Roehrs V."/>
            <person name="Lopez-Lara I.M."/>
            <person name="Geiger O."/>
        </authorList>
    </citation>
    <scope>NUCLEOTIDE SEQUENCE [GENOMIC DNA]</scope>
    <scope>FUNCTION</scope>
    <scope>CATALYTIC ACTIVITY</scope>
    <source>
        <strain>1021</strain>
    </source>
</reference>
<reference key="2">
    <citation type="journal article" date="2001" name="Proc. Natl. Acad. Sci. U.S.A.">
        <title>Analysis of the chromosome sequence of the legume symbiont Sinorhizobium meliloti strain 1021.</title>
        <authorList>
            <person name="Capela D."/>
            <person name="Barloy-Hubler F."/>
            <person name="Gouzy J."/>
            <person name="Bothe G."/>
            <person name="Ampe F."/>
            <person name="Batut J."/>
            <person name="Boistard P."/>
            <person name="Becker A."/>
            <person name="Boutry M."/>
            <person name="Cadieu E."/>
            <person name="Dreano S."/>
            <person name="Gloux S."/>
            <person name="Godrie T."/>
            <person name="Goffeau A."/>
            <person name="Kahn D."/>
            <person name="Kiss E."/>
            <person name="Lelaure V."/>
            <person name="Masuy D."/>
            <person name="Pohl T."/>
            <person name="Portetelle D."/>
            <person name="Puehler A."/>
            <person name="Purnelle B."/>
            <person name="Ramsperger U."/>
            <person name="Renard C."/>
            <person name="Thebault P."/>
            <person name="Vandenbol M."/>
            <person name="Weidner S."/>
            <person name="Galibert F."/>
        </authorList>
    </citation>
    <scope>NUCLEOTIDE SEQUENCE [LARGE SCALE GENOMIC DNA]</scope>
    <source>
        <strain>1021</strain>
    </source>
</reference>
<reference key="3">
    <citation type="journal article" date="2001" name="Science">
        <title>The composite genome of the legume symbiont Sinorhizobium meliloti.</title>
        <authorList>
            <person name="Galibert F."/>
            <person name="Finan T.M."/>
            <person name="Long S.R."/>
            <person name="Puehler A."/>
            <person name="Abola P."/>
            <person name="Ampe F."/>
            <person name="Barloy-Hubler F."/>
            <person name="Barnett M.J."/>
            <person name="Becker A."/>
            <person name="Boistard P."/>
            <person name="Bothe G."/>
            <person name="Boutry M."/>
            <person name="Bowser L."/>
            <person name="Buhrmester J."/>
            <person name="Cadieu E."/>
            <person name="Capela D."/>
            <person name="Chain P."/>
            <person name="Cowie A."/>
            <person name="Davis R.W."/>
            <person name="Dreano S."/>
            <person name="Federspiel N.A."/>
            <person name="Fisher R.F."/>
            <person name="Gloux S."/>
            <person name="Godrie T."/>
            <person name="Goffeau A."/>
            <person name="Golding B."/>
            <person name="Gouzy J."/>
            <person name="Gurjal M."/>
            <person name="Hernandez-Lucas I."/>
            <person name="Hong A."/>
            <person name="Huizar L."/>
            <person name="Hyman R.W."/>
            <person name="Jones T."/>
            <person name="Kahn D."/>
            <person name="Kahn M.L."/>
            <person name="Kalman S."/>
            <person name="Keating D.H."/>
            <person name="Kiss E."/>
            <person name="Komp C."/>
            <person name="Lelaure V."/>
            <person name="Masuy D."/>
            <person name="Palm C."/>
            <person name="Peck M.C."/>
            <person name="Pohl T.M."/>
            <person name="Portetelle D."/>
            <person name="Purnelle B."/>
            <person name="Ramsperger U."/>
            <person name="Surzycki R."/>
            <person name="Thebault P."/>
            <person name="Vandenbol M."/>
            <person name="Vorhoelter F.J."/>
            <person name="Weidner S."/>
            <person name="Wells D.H."/>
            <person name="Wong K."/>
            <person name="Yeh K.-C."/>
            <person name="Batut J."/>
        </authorList>
    </citation>
    <scope>NUCLEOTIDE SEQUENCE [LARGE SCALE GENOMIC DNA]</scope>
    <source>
        <strain>1021</strain>
    </source>
</reference>
<reference key="4">
    <citation type="journal article" date="1999" name="J. Biol. Chem.">
        <title>Plant-exuded choline is used for rhizobial membrane lipid biosynthesis by phosphatidylcholine synthase.</title>
        <authorList>
            <person name="de Rudder K.E."/>
            <person name="Sohlenkamp C."/>
            <person name="Geiger O."/>
        </authorList>
    </citation>
    <scope>FUNCTION</scope>
    <scope>CATALYTIC ACTIVITY</scope>
    <scope>COFACTOR</scope>
    <scope>ACTIVITY REGULATION</scope>
    <scope>BIOPHYSICOCHEMICAL PROPERTIES</scope>
    <source>
        <strain>1021</strain>
    </source>
</reference>
<reference key="5">
    <citation type="journal article" date="2003" name="Microbiology">
        <title>Pathways for phosphatidylcholine biosynthesis in bacteria.</title>
        <authorList>
            <person name="Martinez-Morales F."/>
            <person name="Schobert M."/>
            <person name="Lopez-Lara I.M."/>
            <person name="Geiger O."/>
        </authorList>
    </citation>
    <scope>FUNCTION</scope>
    <scope>CATALYTIC ACTIVITY</scope>
    <source>
        <strain>1021</strain>
    </source>
</reference>
<reference key="6">
    <citation type="journal article" date="2012" name="Biochim. Biophys. Acta">
        <title>Functional and topological analysis of phosphatidylcholine synthase from Sinorhizobium meliloti.</title>
        <authorList>
            <person name="Solis-Oviedo R.L."/>
            <person name="Martinez-Morales F."/>
            <person name="Geiger O."/>
            <person name="Sohlenkamp C."/>
        </authorList>
    </citation>
    <scope>FUNCTION</scope>
    <scope>CATALYTIC ACTIVITY</scope>
    <scope>SUBCELLULAR LOCATION</scope>
    <scope>TOPOLOGY</scope>
    <scope>MUTAGENESIS OF HIS-20; THR-23; ASP-56; ASP-59; GLY-60; GLY-77; ASP-81; ASP-85 AND TYR-123</scope>
    <source>
        <strain>1021</strain>
    </source>
</reference>
<keyword id="KW-0997">Cell inner membrane</keyword>
<keyword id="KW-1003">Cell membrane</keyword>
<keyword id="KW-0444">Lipid biosynthesis</keyword>
<keyword id="KW-0443">Lipid metabolism</keyword>
<keyword id="KW-0464">Manganese</keyword>
<keyword id="KW-0472">Membrane</keyword>
<keyword id="KW-0594">Phospholipid biosynthesis</keyword>
<keyword id="KW-1208">Phospholipid metabolism</keyword>
<keyword id="KW-1185">Reference proteome</keyword>
<keyword id="KW-0808">Transferase</keyword>
<keyword id="KW-0812">Transmembrane</keyword>
<keyword id="KW-1133">Transmembrane helix</keyword>
<sequence>MKFFNYRRVPYAEIRAFSVHILTASGSFLAFLGVVAAAEHRFVDMFWWLGLALLVDGIDGPIARKVQVKEVLPNWSGDTLDNVIDYVTYVLLPAFALYQSGMIGEPWSFVAAGAIVVSSAIYYADMGMKTDEYFFSGFPVVWNMVVFTLFVIQASEVTASIVVFLSVILTFLPINFLHPVRVKRLRPLNLGIFLVWSVLGMYALLLHFETPPWVVVGVVATGLYLYVIGFILQIFPKLGRA</sequence>
<name>PCS_RHIME</name>
<dbReference type="EC" id="2.7.8.24"/>
<dbReference type="EMBL" id="AF155772">
    <property type="protein sequence ID" value="AAF27310.1"/>
    <property type="molecule type" value="Genomic_DNA"/>
</dbReference>
<dbReference type="EMBL" id="AL591688">
    <property type="protein sequence ID" value="CAC46251.1"/>
    <property type="molecule type" value="Genomic_DNA"/>
</dbReference>
<dbReference type="RefSeq" id="NP_385778.1">
    <property type="nucleotide sequence ID" value="NC_003047.1"/>
</dbReference>
<dbReference type="SMR" id="Q9KJY8"/>
<dbReference type="EnsemblBacteria" id="CAC46251">
    <property type="protein sequence ID" value="CAC46251"/>
    <property type="gene ID" value="SMc00247"/>
</dbReference>
<dbReference type="GeneID" id="89576007"/>
<dbReference type="KEGG" id="sme:SMc00247"/>
<dbReference type="PATRIC" id="fig|266834.11.peg.3105"/>
<dbReference type="eggNOG" id="COG1183">
    <property type="taxonomic scope" value="Bacteria"/>
</dbReference>
<dbReference type="HOGENOM" id="CLU_086279_0_0_5"/>
<dbReference type="OrthoDB" id="350520at2"/>
<dbReference type="BioCyc" id="MetaCyc:MONOMER-16699"/>
<dbReference type="BRENDA" id="2.7.8.24">
    <property type="organism ID" value="5347"/>
</dbReference>
<dbReference type="Proteomes" id="UP000001976">
    <property type="component" value="Chromosome"/>
</dbReference>
<dbReference type="GO" id="GO:0005886">
    <property type="term" value="C:plasma membrane"/>
    <property type="evidence" value="ECO:0007669"/>
    <property type="project" value="UniProtKB-SubCell"/>
</dbReference>
<dbReference type="GO" id="GO:0050520">
    <property type="term" value="F:phosphatidylcholine synthase activity"/>
    <property type="evidence" value="ECO:0007669"/>
    <property type="project" value="UniProtKB-EC"/>
</dbReference>
<dbReference type="GO" id="GO:0008654">
    <property type="term" value="P:phospholipid biosynthetic process"/>
    <property type="evidence" value="ECO:0007669"/>
    <property type="project" value="UniProtKB-KW"/>
</dbReference>
<dbReference type="FunFam" id="1.20.120.1760:FF:000009">
    <property type="entry name" value="Phosphatidylcholine synthase"/>
    <property type="match status" value="1"/>
</dbReference>
<dbReference type="Gene3D" id="1.20.120.1760">
    <property type="match status" value="1"/>
</dbReference>
<dbReference type="InterPro" id="IPR000462">
    <property type="entry name" value="CDP-OH_P_trans"/>
</dbReference>
<dbReference type="InterPro" id="IPR043130">
    <property type="entry name" value="CDP-OH_PTrfase_TM_dom"/>
</dbReference>
<dbReference type="InterPro" id="IPR026027">
    <property type="entry name" value="PcS"/>
</dbReference>
<dbReference type="NCBIfam" id="NF045884">
    <property type="entry name" value="PhCholSynAgro"/>
    <property type="match status" value="1"/>
</dbReference>
<dbReference type="Pfam" id="PF01066">
    <property type="entry name" value="CDP-OH_P_transf"/>
    <property type="match status" value="1"/>
</dbReference>
<dbReference type="PIRSF" id="PIRSF000851">
    <property type="entry name" value="PcS"/>
    <property type="match status" value="1"/>
</dbReference>
<gene>
    <name type="primary">pcs</name>
    <name type="ordered locus">R01672</name>
    <name type="ORF">SMc00247</name>
</gene>
<organism>
    <name type="scientific">Rhizobium meliloti (strain 1021)</name>
    <name type="common">Ensifer meliloti</name>
    <name type="synonym">Sinorhizobium meliloti</name>
    <dbReference type="NCBI Taxonomy" id="266834"/>
    <lineage>
        <taxon>Bacteria</taxon>
        <taxon>Pseudomonadati</taxon>
        <taxon>Pseudomonadota</taxon>
        <taxon>Alphaproteobacteria</taxon>
        <taxon>Hyphomicrobiales</taxon>
        <taxon>Rhizobiaceae</taxon>
        <taxon>Sinorhizobium/Ensifer group</taxon>
        <taxon>Sinorhizobium</taxon>
    </lineage>
</organism>
<feature type="chain" id="PRO_0000056812" description="Phosphatidylcholine synthase">
    <location>
        <begin position="1"/>
        <end position="241"/>
    </location>
</feature>
<feature type="topological domain" description="Cytoplasmic" evidence="4">
    <location>
        <begin position="1"/>
        <end position="15"/>
    </location>
</feature>
<feature type="transmembrane region" description="Helical; Name=1" evidence="5">
    <location>
        <begin position="16"/>
        <end position="36"/>
    </location>
</feature>
<feature type="topological domain" description="Periplasmic" evidence="6">
    <location>
        <begin position="37"/>
        <end position="41"/>
    </location>
</feature>
<feature type="transmembrane region" description="Helical; Name=2" evidence="5">
    <location>
        <begin position="42"/>
        <end position="62"/>
    </location>
</feature>
<feature type="topological domain" description="Cytoplasmic" evidence="6">
    <location>
        <begin position="63"/>
        <end position="76"/>
    </location>
</feature>
<feature type="transmembrane region" description="Helical; Name= 3" evidence="5">
    <location>
        <begin position="77"/>
        <end position="97"/>
    </location>
</feature>
<feature type="topological domain" description="Periplasmic" evidence="6">
    <location>
        <begin position="98"/>
        <end position="100"/>
    </location>
</feature>
<feature type="transmembrane region" description="Helical; Name=4" evidence="5">
    <location>
        <begin position="101"/>
        <end position="121"/>
    </location>
</feature>
<feature type="topological domain" description="Cytoplasmic" evidence="6">
    <location>
        <begin position="122"/>
        <end position="133"/>
    </location>
</feature>
<feature type="transmembrane region" description="Helical; Name=5" evidence="5">
    <location>
        <begin position="134"/>
        <end position="154"/>
    </location>
</feature>
<feature type="topological domain" description="Periplasmic" evidence="4">
    <location>
        <begin position="155"/>
        <end position="156"/>
    </location>
</feature>
<feature type="transmembrane region" description="Helical; Name=6" evidence="5">
    <location>
        <begin position="157"/>
        <end position="177"/>
    </location>
</feature>
<feature type="topological domain" description="Cytoplasmic" evidence="6">
    <location>
        <begin position="178"/>
        <end position="187"/>
    </location>
</feature>
<feature type="transmembrane region" description="Helical; Name=7" evidence="5">
    <location>
        <begin position="188"/>
        <end position="208"/>
    </location>
</feature>
<feature type="topological domain" description="Periplasmic" evidence="6">
    <location>
        <begin position="209"/>
        <end position="211"/>
    </location>
</feature>
<feature type="transmembrane region" description="Helical; Name=8" evidence="5">
    <location>
        <begin position="212"/>
        <end position="232"/>
    </location>
</feature>
<feature type="topological domain" description="Cytoplasmic" evidence="4">
    <location>
        <begin position="233"/>
        <end position="241"/>
    </location>
</feature>
<feature type="mutagenesis site" description="Loss of enzyme activity." evidence="4">
    <original>H</original>
    <variation>A</variation>
    <location>
        <position position="20"/>
    </location>
</feature>
<feature type="mutagenesis site" description="32% of wild-type enzyme activity." evidence="4">
    <original>H</original>
    <variation>L</variation>
    <location>
        <position position="20"/>
    </location>
</feature>
<feature type="mutagenesis site" description="Loss of enzyme activity." evidence="4">
    <original>T</original>
    <variation>A</variation>
    <location>
        <position position="23"/>
    </location>
</feature>
<feature type="mutagenesis site" description="63% of wild-type enzyme activity." evidence="4">
    <original>T</original>
    <variation>S</variation>
    <location>
        <position position="23"/>
    </location>
</feature>
<feature type="mutagenesis site" description="Loss of enzyme activity." evidence="4">
    <original>D</original>
    <variation>A</variation>
    <variation>E</variation>
    <variation>N</variation>
    <location>
        <position position="56"/>
    </location>
</feature>
<feature type="mutagenesis site" description="Loss of enzyme activity." evidence="4">
    <original>D</original>
    <variation>A</variation>
    <variation>E</variation>
    <variation>N</variation>
    <location>
        <position position="59"/>
    </location>
</feature>
<feature type="mutagenesis site" description="Loss of enzyme activity." evidence="4">
    <original>G</original>
    <variation>A</variation>
    <location>
        <position position="60"/>
    </location>
</feature>
<feature type="mutagenesis site" description="Strongly reduced enzyme activity." evidence="4">
    <original>G</original>
    <variation>A</variation>
    <location>
        <position position="77"/>
    </location>
</feature>
<feature type="mutagenesis site" description="Loss of enzyme activity." evidence="4">
    <original>D</original>
    <variation>A</variation>
    <location>
        <position position="81"/>
    </location>
</feature>
<feature type="mutagenesis site" description="Strongly reduced enzyme activity." evidence="4">
    <original>D</original>
    <variation>E</variation>
    <variation>N</variation>
    <location>
        <position position="81"/>
    </location>
</feature>
<feature type="mutagenesis site" description="Loss of enzyme activity." evidence="4">
    <original>D</original>
    <variation>A</variation>
    <variation>E</variation>
    <variation>N</variation>
    <location>
        <position position="85"/>
    </location>
</feature>
<feature type="mutagenesis site" description="Strongly reduced enzyme activity." evidence="4">
    <original>Y</original>
    <variation>A</variation>
    <location>
        <position position="123"/>
    </location>
</feature>
<comment type="function">
    <text evidence="1 2 3 4">Condenses choline with CDP-diglyceride to produce phosphatidylcholine and CMP.</text>
</comment>
<comment type="catalytic activity">
    <reaction evidence="1 2 3 4">
        <text>a CDP-1,2-diacyl-sn-glycerol + choline = a 1,2-diacyl-sn-glycero-3-phosphocholine + CMP + H(+)</text>
        <dbReference type="Rhea" id="RHEA:14597"/>
        <dbReference type="ChEBI" id="CHEBI:15354"/>
        <dbReference type="ChEBI" id="CHEBI:15378"/>
        <dbReference type="ChEBI" id="CHEBI:57643"/>
        <dbReference type="ChEBI" id="CHEBI:58332"/>
        <dbReference type="ChEBI" id="CHEBI:60377"/>
        <dbReference type="EC" id="2.7.8.24"/>
    </reaction>
</comment>
<comment type="cofactor">
    <cofactor evidence="1">
        <name>Mn(2+)</name>
        <dbReference type="ChEBI" id="CHEBI:29035"/>
    </cofactor>
</comment>
<comment type="activity regulation">
    <text evidence="1">Activated by CDP-diacylglycerol especially in the presence of Triton X-100 (0.1% w/v) at concentrations where micelles are formed. Maximal activation by Triton X-100 at 0.2% w/v, but higher concentrations become inhibitory. Inhibited by EDTA and high concentrations of choline.</text>
</comment>
<comment type="biophysicochemical properties">
    <phDependence>
        <text evidence="1">Optimum pH is 8.0 in cell-free extracts. Activity decreases as pH is raised or lowered.</text>
    </phDependence>
</comment>
<comment type="subcellular location">
    <subcellularLocation>
        <location evidence="4">Cell inner membrane</location>
        <topology evidence="4">Multi-pass membrane protein</topology>
    </subcellularLocation>
</comment>
<comment type="similarity">
    <text evidence="5">Belongs to the CDP-alcohol phosphatidyltransferase class-I family.</text>
</comment>
<evidence type="ECO:0000269" key="1">
    <source>
    </source>
</evidence>
<evidence type="ECO:0000269" key="2">
    <source>
    </source>
</evidence>
<evidence type="ECO:0000269" key="3">
    <source>
    </source>
</evidence>
<evidence type="ECO:0000269" key="4">
    <source>
    </source>
</evidence>
<evidence type="ECO:0000305" key="5"/>
<evidence type="ECO:0000305" key="6">
    <source>
    </source>
</evidence>
<proteinExistence type="evidence at protein level"/>
<protein>
    <recommendedName>
        <fullName>Phosphatidylcholine synthase</fullName>
        <shortName>PC synthase</shortName>
        <shortName>PCS</shortName>
        <ecNumber>2.7.8.24</ecNumber>
    </recommendedName>
    <alternativeName>
        <fullName>CDP-diglyceride-choline O-phosphatidyltransferase</fullName>
    </alternativeName>
</protein>
<accession>Q9KJY8</accession>